<accession>Q8U297</accession>
<name>ILVD_PYRFU</name>
<reference key="1">
    <citation type="journal article" date="1999" name="Genetics">
        <title>Divergence of the hyperthermophilic archaea Pyrococcus furiosus and P. horikoshii inferred from complete genomic sequences.</title>
        <authorList>
            <person name="Maeder D.L."/>
            <person name="Weiss R.B."/>
            <person name="Dunn D.M."/>
            <person name="Cherry J.L."/>
            <person name="Gonzalez J.M."/>
            <person name="DiRuggiero J."/>
            <person name="Robb F.T."/>
        </authorList>
    </citation>
    <scope>NUCLEOTIDE SEQUENCE [LARGE SCALE GENOMIC DNA]</scope>
    <source>
        <strain>ATCC 43587 / DSM 3638 / JCM 8422 / Vc1</strain>
    </source>
</reference>
<proteinExistence type="inferred from homology"/>
<keyword id="KW-0001">2Fe-2S</keyword>
<keyword id="KW-0028">Amino-acid biosynthesis</keyword>
<keyword id="KW-0100">Branched-chain amino acid biosynthesis</keyword>
<keyword id="KW-0408">Iron</keyword>
<keyword id="KW-0411">Iron-sulfur</keyword>
<keyword id="KW-0456">Lyase</keyword>
<keyword id="KW-0460">Magnesium</keyword>
<keyword id="KW-0479">Metal-binding</keyword>
<keyword id="KW-1185">Reference proteome</keyword>
<evidence type="ECO:0000255" key="1">
    <source>
        <dbReference type="HAMAP-Rule" id="MF_00012"/>
    </source>
</evidence>
<gene>
    <name evidence="1" type="primary">ilvD</name>
    <name type="ordered locus">PF0942</name>
</gene>
<dbReference type="EC" id="4.2.1.9" evidence="1"/>
<dbReference type="EMBL" id="AE009950">
    <property type="protein sequence ID" value="AAL81066.1"/>
    <property type="molecule type" value="Genomic_DNA"/>
</dbReference>
<dbReference type="RefSeq" id="WP_011012078.1">
    <property type="nucleotide sequence ID" value="NZ_CP023154.1"/>
</dbReference>
<dbReference type="SMR" id="Q8U297"/>
<dbReference type="STRING" id="186497.PF0942"/>
<dbReference type="PaxDb" id="186497-PF0942"/>
<dbReference type="GeneID" id="41712752"/>
<dbReference type="KEGG" id="pfu:PF0942"/>
<dbReference type="PATRIC" id="fig|186497.12.peg.998"/>
<dbReference type="eggNOG" id="arCOG04045">
    <property type="taxonomic scope" value="Archaea"/>
</dbReference>
<dbReference type="HOGENOM" id="CLU_014271_4_2_2"/>
<dbReference type="OrthoDB" id="8674at2157"/>
<dbReference type="PhylomeDB" id="Q8U297"/>
<dbReference type="UniPathway" id="UPA00047">
    <property type="reaction ID" value="UER00057"/>
</dbReference>
<dbReference type="UniPathway" id="UPA00049">
    <property type="reaction ID" value="UER00061"/>
</dbReference>
<dbReference type="Proteomes" id="UP000001013">
    <property type="component" value="Chromosome"/>
</dbReference>
<dbReference type="GO" id="GO:0005829">
    <property type="term" value="C:cytosol"/>
    <property type="evidence" value="ECO:0007669"/>
    <property type="project" value="TreeGrafter"/>
</dbReference>
<dbReference type="GO" id="GO:0051537">
    <property type="term" value="F:2 iron, 2 sulfur cluster binding"/>
    <property type="evidence" value="ECO:0007669"/>
    <property type="project" value="UniProtKB-UniRule"/>
</dbReference>
<dbReference type="GO" id="GO:0004160">
    <property type="term" value="F:dihydroxy-acid dehydratase activity"/>
    <property type="evidence" value="ECO:0007669"/>
    <property type="project" value="UniProtKB-UniRule"/>
</dbReference>
<dbReference type="GO" id="GO:0000287">
    <property type="term" value="F:magnesium ion binding"/>
    <property type="evidence" value="ECO:0007669"/>
    <property type="project" value="UniProtKB-UniRule"/>
</dbReference>
<dbReference type="GO" id="GO:0009097">
    <property type="term" value="P:isoleucine biosynthetic process"/>
    <property type="evidence" value="ECO:0007669"/>
    <property type="project" value="UniProtKB-UniRule"/>
</dbReference>
<dbReference type="GO" id="GO:0009099">
    <property type="term" value="P:L-valine biosynthetic process"/>
    <property type="evidence" value="ECO:0007669"/>
    <property type="project" value="UniProtKB-UniRule"/>
</dbReference>
<dbReference type="FunFam" id="3.50.30.80:FF:000001">
    <property type="entry name" value="Dihydroxy-acid dehydratase"/>
    <property type="match status" value="1"/>
</dbReference>
<dbReference type="Gene3D" id="3.50.30.80">
    <property type="entry name" value="IlvD/EDD C-terminal domain-like"/>
    <property type="match status" value="1"/>
</dbReference>
<dbReference type="HAMAP" id="MF_00012">
    <property type="entry name" value="IlvD"/>
    <property type="match status" value="1"/>
</dbReference>
<dbReference type="InterPro" id="IPR042096">
    <property type="entry name" value="Dihydro-acid_dehy_C"/>
</dbReference>
<dbReference type="InterPro" id="IPR004404">
    <property type="entry name" value="DihydroxyA_deHydtase"/>
</dbReference>
<dbReference type="InterPro" id="IPR020558">
    <property type="entry name" value="DiOHA_6PGluconate_deHydtase_CS"/>
</dbReference>
<dbReference type="InterPro" id="IPR056740">
    <property type="entry name" value="ILV_EDD_C"/>
</dbReference>
<dbReference type="InterPro" id="IPR000581">
    <property type="entry name" value="ILV_EDD_N"/>
</dbReference>
<dbReference type="InterPro" id="IPR037237">
    <property type="entry name" value="IlvD/EDD_N"/>
</dbReference>
<dbReference type="NCBIfam" id="TIGR00110">
    <property type="entry name" value="ilvD"/>
    <property type="match status" value="1"/>
</dbReference>
<dbReference type="NCBIfam" id="NF002068">
    <property type="entry name" value="PRK00911.1"/>
    <property type="match status" value="1"/>
</dbReference>
<dbReference type="PANTHER" id="PTHR43661">
    <property type="entry name" value="D-XYLONATE DEHYDRATASE"/>
    <property type="match status" value="1"/>
</dbReference>
<dbReference type="PANTHER" id="PTHR43661:SF3">
    <property type="entry name" value="D-XYLONATE DEHYDRATASE YAGF-RELATED"/>
    <property type="match status" value="1"/>
</dbReference>
<dbReference type="Pfam" id="PF24877">
    <property type="entry name" value="ILV_EDD_C"/>
    <property type="match status" value="1"/>
</dbReference>
<dbReference type="Pfam" id="PF00920">
    <property type="entry name" value="ILVD_EDD_N"/>
    <property type="match status" value="1"/>
</dbReference>
<dbReference type="SUPFAM" id="SSF143975">
    <property type="entry name" value="IlvD/EDD N-terminal domain-like"/>
    <property type="match status" value="1"/>
</dbReference>
<dbReference type="SUPFAM" id="SSF52016">
    <property type="entry name" value="LeuD/IlvD-like"/>
    <property type="match status" value="1"/>
</dbReference>
<dbReference type="PROSITE" id="PS00886">
    <property type="entry name" value="ILVD_EDD_1"/>
    <property type="match status" value="1"/>
</dbReference>
<dbReference type="PROSITE" id="PS00887">
    <property type="entry name" value="ILVD_EDD_2"/>
    <property type="match status" value="1"/>
</dbReference>
<feature type="chain" id="PRO_0000103549" description="Dihydroxy-acid dehydratase">
    <location>
        <begin position="1"/>
        <end position="551"/>
    </location>
</feature>
<feature type="active site" description="Proton acceptor" evidence="1">
    <location>
        <position position="467"/>
    </location>
</feature>
<feature type="binding site" evidence="1">
    <location>
        <position position="78"/>
    </location>
    <ligand>
        <name>Mg(2+)</name>
        <dbReference type="ChEBI" id="CHEBI:18420"/>
    </ligand>
</feature>
<feature type="binding site" evidence="1">
    <location>
        <position position="119"/>
    </location>
    <ligand>
        <name>[2Fe-2S] cluster</name>
        <dbReference type="ChEBI" id="CHEBI:190135"/>
    </ligand>
</feature>
<feature type="binding site" evidence="1">
    <location>
        <position position="120"/>
    </location>
    <ligand>
        <name>Mg(2+)</name>
        <dbReference type="ChEBI" id="CHEBI:18420"/>
    </ligand>
</feature>
<feature type="binding site" description="via carbamate group" evidence="1">
    <location>
        <position position="121"/>
    </location>
    <ligand>
        <name>Mg(2+)</name>
        <dbReference type="ChEBI" id="CHEBI:18420"/>
    </ligand>
</feature>
<feature type="binding site" evidence="1">
    <location>
        <position position="191"/>
    </location>
    <ligand>
        <name>[2Fe-2S] cluster</name>
        <dbReference type="ChEBI" id="CHEBI:190135"/>
    </ligand>
</feature>
<feature type="binding site" evidence="1">
    <location>
        <position position="441"/>
    </location>
    <ligand>
        <name>Mg(2+)</name>
        <dbReference type="ChEBI" id="CHEBI:18420"/>
    </ligand>
</feature>
<feature type="modified residue" description="N6-carboxylysine" evidence="1">
    <location>
        <position position="121"/>
    </location>
</feature>
<sequence length="551" mass="59441">MRSDVIKKGIERAPHRSLFKAMGFTDEELERPLIGVANSFNELIPGHIHLRKIAEAVKAGIRMAGGTPLEFNTIGICDGIAMNHLGMKYSLPSRELIADSVELVARVYHFDGIVVIASCDKIIPGMLMAIARLNIPAIFVSGGPMLPGRFKGEYVDVKTVFEAVGAVKAGKMSYEELKLLENFACPGCGSCAGMFTANTMNALTEALGISLPWNGTAPAPYAHRIRIAKETGMQIVKLVEKDVKARDILTREAFEDAIAVDMALGGSTNTVLHLMAIANEAKVDLSLEDFDRISEKTPTLAKLSPAGKHFVVDLYEAGGILGVMKRLSELGLIHEDRLTVSLKTVGELLKSAFVSRDDVIRPVTNPYHPRGGIMILRGTLAPNGAVIKVSAVEGVEVFEGPAKVFDSEEEATAAILSGKIERGDVVVIRYEGPKGGPGMREMLTPTSAIAGMGLDKDVALVTDGRFSGATRGLSVGHVSPEAAEGGPIALVKDGDIIRIDLKNKRIDLLVDEEELRKRREEWKPKVKELTGYLKRYSTLVTSANTGAILRH</sequence>
<organism>
    <name type="scientific">Pyrococcus furiosus (strain ATCC 43587 / DSM 3638 / JCM 8422 / Vc1)</name>
    <dbReference type="NCBI Taxonomy" id="186497"/>
    <lineage>
        <taxon>Archaea</taxon>
        <taxon>Methanobacteriati</taxon>
        <taxon>Methanobacteriota</taxon>
        <taxon>Thermococci</taxon>
        <taxon>Thermococcales</taxon>
        <taxon>Thermococcaceae</taxon>
        <taxon>Pyrococcus</taxon>
    </lineage>
</organism>
<protein>
    <recommendedName>
        <fullName evidence="1">Dihydroxy-acid dehydratase</fullName>
        <shortName evidence="1">DAD</shortName>
        <ecNumber evidence="1">4.2.1.9</ecNumber>
    </recommendedName>
</protein>
<comment type="function">
    <text evidence="1">Functions in the biosynthesis of branched-chain amino acids. Catalyzes the dehydration of (2R,3R)-2,3-dihydroxy-3-methylpentanoate (2,3-dihydroxy-3-methylvalerate) into 2-oxo-3-methylpentanoate (2-oxo-3-methylvalerate) and of (2R)-2,3-dihydroxy-3-methylbutanoate (2,3-dihydroxyisovalerate) into 2-oxo-3-methylbutanoate (2-oxoisovalerate), the penultimate precursor to L-isoleucine and L-valine, respectively.</text>
</comment>
<comment type="catalytic activity">
    <reaction evidence="1">
        <text>(2R)-2,3-dihydroxy-3-methylbutanoate = 3-methyl-2-oxobutanoate + H2O</text>
        <dbReference type="Rhea" id="RHEA:24809"/>
        <dbReference type="ChEBI" id="CHEBI:11851"/>
        <dbReference type="ChEBI" id="CHEBI:15377"/>
        <dbReference type="ChEBI" id="CHEBI:49072"/>
        <dbReference type="EC" id="4.2.1.9"/>
    </reaction>
    <physiologicalReaction direction="left-to-right" evidence="1">
        <dbReference type="Rhea" id="RHEA:24810"/>
    </physiologicalReaction>
</comment>
<comment type="catalytic activity">
    <reaction evidence="1">
        <text>(2R,3R)-2,3-dihydroxy-3-methylpentanoate = (S)-3-methyl-2-oxopentanoate + H2O</text>
        <dbReference type="Rhea" id="RHEA:27694"/>
        <dbReference type="ChEBI" id="CHEBI:15377"/>
        <dbReference type="ChEBI" id="CHEBI:35146"/>
        <dbReference type="ChEBI" id="CHEBI:49258"/>
        <dbReference type="EC" id="4.2.1.9"/>
    </reaction>
    <physiologicalReaction direction="left-to-right" evidence="1">
        <dbReference type="Rhea" id="RHEA:27695"/>
    </physiologicalReaction>
</comment>
<comment type="cofactor">
    <cofactor evidence="1">
        <name>[2Fe-2S] cluster</name>
        <dbReference type="ChEBI" id="CHEBI:190135"/>
    </cofactor>
    <text evidence="1">Binds 1 [2Fe-2S] cluster per subunit. This cluster acts as a Lewis acid cofactor.</text>
</comment>
<comment type="cofactor">
    <cofactor evidence="1">
        <name>Mg(2+)</name>
        <dbReference type="ChEBI" id="CHEBI:18420"/>
    </cofactor>
</comment>
<comment type="pathway">
    <text evidence="1">Amino-acid biosynthesis; L-isoleucine biosynthesis; L-isoleucine from 2-oxobutanoate: step 3/4.</text>
</comment>
<comment type="pathway">
    <text evidence="1">Amino-acid biosynthesis; L-valine biosynthesis; L-valine from pyruvate: step 3/4.</text>
</comment>
<comment type="subunit">
    <text evidence="1">Homodimer.</text>
</comment>
<comment type="similarity">
    <text evidence="1">Belongs to the IlvD/Edd family.</text>
</comment>